<dbReference type="EMBL" id="AE017354">
    <property type="protein sequence ID" value="AAU26401.1"/>
    <property type="molecule type" value="Genomic_DNA"/>
</dbReference>
<dbReference type="RefSeq" id="WP_010946055.1">
    <property type="nucleotide sequence ID" value="NC_002942.5"/>
</dbReference>
<dbReference type="RefSeq" id="YP_094348.1">
    <property type="nucleotide sequence ID" value="NC_002942.5"/>
</dbReference>
<dbReference type="PDB" id="6SZ9">
    <property type="method" value="EM"/>
    <property type="resolution" value="3.70 A"/>
    <property type="chains" value="E=1-230"/>
</dbReference>
<dbReference type="PDB" id="7OVB">
    <property type="method" value="EM"/>
    <property type="resolution" value="3.61 A"/>
    <property type="chains" value="E=1-230"/>
</dbReference>
<dbReference type="PDB" id="7UPS">
    <property type="method" value="X-ray"/>
    <property type="resolution" value="2.43 A"/>
    <property type="chains" value="A/B/C/D=8-219"/>
</dbReference>
<dbReference type="PDBsum" id="6SZ9"/>
<dbReference type="PDBsum" id="7OVB"/>
<dbReference type="PDBsum" id="7UPS"/>
<dbReference type="EMDB" id="EMD-10350"/>
<dbReference type="EMDB" id="EMD-13083"/>
<dbReference type="SMR" id="Q5ZYR7"/>
<dbReference type="STRING" id="272624.lpg0294"/>
<dbReference type="PaxDb" id="272624-lpg0294"/>
<dbReference type="KEGG" id="lpn:lpg0294"/>
<dbReference type="PATRIC" id="fig|272624.6.peg.314"/>
<dbReference type="eggNOG" id="ENOG5030NFC">
    <property type="taxonomic scope" value="Bacteria"/>
</dbReference>
<dbReference type="HOGENOM" id="CLU_093805_0_0_6"/>
<dbReference type="OrthoDB" id="5635174at2"/>
<dbReference type="Proteomes" id="UP000000609">
    <property type="component" value="Chromosome"/>
</dbReference>
<dbReference type="GO" id="GO:0005737">
    <property type="term" value="C:cytoplasm"/>
    <property type="evidence" value="ECO:0007669"/>
    <property type="project" value="UniProtKB-SubCell"/>
</dbReference>
<dbReference type="GO" id="GO:0015031">
    <property type="term" value="P:protein transport"/>
    <property type="evidence" value="ECO:0007669"/>
    <property type="project" value="UniProtKB-KW"/>
</dbReference>
<dbReference type="CDD" id="cd22643">
    <property type="entry name" value="DotY_NTD"/>
    <property type="match status" value="1"/>
</dbReference>
<dbReference type="InterPro" id="IPR056465">
    <property type="entry name" value="DotY"/>
</dbReference>
<dbReference type="InterPro" id="IPR049927">
    <property type="entry name" value="DotY_N"/>
</dbReference>
<dbReference type="Pfam" id="PF23131">
    <property type="entry name" value="DotY"/>
    <property type="match status" value="1"/>
</dbReference>
<keyword id="KW-0002">3D-structure</keyword>
<keyword id="KW-0963">Cytoplasm</keyword>
<keyword id="KW-0653">Protein transport</keyword>
<keyword id="KW-1185">Reference proteome</keyword>
<keyword id="KW-0813">Transport</keyword>
<keyword id="KW-0843">Virulence</keyword>
<protein>
    <recommendedName>
        <fullName evidence="5">Type 4 apparatus protein DotY</fullName>
    </recommendedName>
</protein>
<comment type="function">
    <text evidence="2 3">Component of the Dot/Icm type IVB secretion system (T4BSS), which is used to inject bacterial effector proteins into eukaryotic host cells (PubMed:32513920). Part of a subcomplex which recruits effector proteins and delivers them to the core transmembrane subcomplex (PubMed:32513920). DotY and DotZ play a role in effector translocation, but are not essential and do not influence the stability of the subcomplex main components (PubMed:34816517). The DotY/DotZ main function is to optimize secretion by modulating the delivery trajectory of the IcmSW module and the localization of the machinery to the poles (PubMed:34816517).</text>
</comment>
<comment type="subunit">
    <text evidence="2 3">The T4BSS is a complex nanomachine composed of several subcomplexes. This subunit is part of the Type IV Coupling Complex (T4CC), a subcomplex composed of the DotLMNYZ core and the IcmSW-LvgA adapter subunits, linked by the C-terminal tail of DotL (PubMed:32513920). Six DotLMNYZ hetero-pentameric units may assemble into a hexameric nanomachine, forming an inner membrane channel for effectors to pass through (PubMed:32513920). Interacts exclusively with DotZ (PubMed:32513920, PubMed:34816517). DotY and DotZ are co-dependent for the assembly into the T4CC (PubMed:34816517).</text>
</comment>
<comment type="subcellular location">
    <subcellularLocation>
        <location evidence="6">Cytoplasm</location>
    </subcellularLocation>
    <text evidence="3">Localizes to the poles of the cell. Localization depends on the fully assembled T4CC subcomplex.</text>
</comment>
<comment type="disruption phenotype">
    <text evidence="2 3">Deletion of the gene leads to a reduced intracellular growth in the protozoa A.castellanii and decreased levels of effector translocation (PubMed:32513920). Deletion of dotY results in the absence of both DotY and DotZ proteins in the coupling complex (PubMed:34816517). Deletion mutant shows significantly reduced DotL polar localization (PubMed:34816517).</text>
</comment>
<organism>
    <name type="scientific">Legionella pneumophila subsp. pneumophila (strain Philadelphia 1 / ATCC 33152 / DSM 7513)</name>
    <dbReference type="NCBI Taxonomy" id="272624"/>
    <lineage>
        <taxon>Bacteria</taxon>
        <taxon>Pseudomonadati</taxon>
        <taxon>Pseudomonadota</taxon>
        <taxon>Gammaproteobacteria</taxon>
        <taxon>Legionellales</taxon>
        <taxon>Legionellaceae</taxon>
        <taxon>Legionella</taxon>
    </lineage>
</organism>
<evidence type="ECO:0000256" key="1">
    <source>
        <dbReference type="SAM" id="MobiDB-lite"/>
    </source>
</evidence>
<evidence type="ECO:0000269" key="2">
    <source>
    </source>
</evidence>
<evidence type="ECO:0000269" key="3">
    <source>
    </source>
</evidence>
<evidence type="ECO:0000303" key="4">
    <source>
    </source>
</evidence>
<evidence type="ECO:0000305" key="5"/>
<evidence type="ECO:0000305" key="6">
    <source>
    </source>
</evidence>
<evidence type="ECO:0000312" key="7">
    <source>
        <dbReference type="EMBL" id="AAU26401.1"/>
    </source>
</evidence>
<evidence type="ECO:0007744" key="8">
    <source>
        <dbReference type="PDB" id="6SZ9"/>
    </source>
</evidence>
<evidence type="ECO:0007829" key="9">
    <source>
        <dbReference type="PDB" id="7UPS"/>
    </source>
</evidence>
<accession>Q5ZYR7</accession>
<name>DOTY_LEGPH</name>
<feature type="chain" id="PRO_0000455593" description="Type 4 apparatus protein DotY">
    <location>
        <begin position="1"/>
        <end position="230"/>
    </location>
</feature>
<feature type="region of interest" description="Disordered" evidence="1">
    <location>
        <begin position="202"/>
        <end position="230"/>
    </location>
</feature>
<feature type="compositionally biased region" description="Basic and acidic residues" evidence="1">
    <location>
        <begin position="204"/>
        <end position="217"/>
    </location>
</feature>
<feature type="helix" evidence="9">
    <location>
        <begin position="8"/>
        <end position="19"/>
    </location>
</feature>
<feature type="helix" evidence="9">
    <location>
        <begin position="23"/>
        <end position="39"/>
    </location>
</feature>
<feature type="turn" evidence="9">
    <location>
        <begin position="43"/>
        <end position="46"/>
    </location>
</feature>
<feature type="helix" evidence="9">
    <location>
        <begin position="47"/>
        <end position="68"/>
    </location>
</feature>
<feature type="helix" evidence="9">
    <location>
        <begin position="81"/>
        <end position="92"/>
    </location>
</feature>
<feature type="turn" evidence="9">
    <location>
        <begin position="93"/>
        <end position="96"/>
    </location>
</feature>
<feature type="strand" evidence="9">
    <location>
        <begin position="101"/>
        <end position="109"/>
    </location>
</feature>
<feature type="strand" evidence="9">
    <location>
        <begin position="114"/>
        <end position="121"/>
    </location>
</feature>
<feature type="helix" evidence="9">
    <location>
        <begin position="128"/>
        <end position="144"/>
    </location>
</feature>
<feature type="strand" evidence="9">
    <location>
        <begin position="147"/>
        <end position="150"/>
    </location>
</feature>
<feature type="strand" evidence="9">
    <location>
        <begin position="153"/>
        <end position="157"/>
    </location>
</feature>
<feature type="strand" evidence="9">
    <location>
        <begin position="163"/>
        <end position="165"/>
    </location>
</feature>
<feature type="helix" evidence="9">
    <location>
        <begin position="168"/>
        <end position="175"/>
    </location>
</feature>
<feature type="turn" evidence="9">
    <location>
        <begin position="178"/>
        <end position="180"/>
    </location>
</feature>
<feature type="helix" evidence="9">
    <location>
        <begin position="182"/>
        <end position="188"/>
    </location>
</feature>
<feature type="strand" evidence="9">
    <location>
        <begin position="194"/>
        <end position="197"/>
    </location>
</feature>
<feature type="helix" evidence="9">
    <location>
        <begin position="203"/>
        <end position="218"/>
    </location>
</feature>
<reference key="1">
    <citation type="journal article" date="2004" name="Science">
        <title>The genomic sequence of the accidental pathogen Legionella pneumophila.</title>
        <authorList>
            <person name="Chien M."/>
            <person name="Morozova I."/>
            <person name="Shi S."/>
            <person name="Sheng H."/>
            <person name="Chen J."/>
            <person name="Gomez S.M."/>
            <person name="Asamani G."/>
            <person name="Hill K."/>
            <person name="Nuara J."/>
            <person name="Feder M."/>
            <person name="Rineer J."/>
            <person name="Greenberg J.J."/>
            <person name="Steshenko V."/>
            <person name="Park S.H."/>
            <person name="Zhao B."/>
            <person name="Teplitskaya E."/>
            <person name="Edwards J.R."/>
            <person name="Pampou S."/>
            <person name="Georghiou A."/>
            <person name="Chou I.-C."/>
            <person name="Iannuccilli W."/>
            <person name="Ulz M.E."/>
            <person name="Kim D.H."/>
            <person name="Geringer-Sameth A."/>
            <person name="Goldsberry C."/>
            <person name="Morozov P."/>
            <person name="Fischer S.G."/>
            <person name="Segal G."/>
            <person name="Qu X."/>
            <person name="Rzhetsky A."/>
            <person name="Zhang P."/>
            <person name="Cayanis E."/>
            <person name="De Jong P.J."/>
            <person name="Ju J."/>
            <person name="Kalachikov S."/>
            <person name="Shuman H.A."/>
            <person name="Russo J.J."/>
        </authorList>
    </citation>
    <scope>NUCLEOTIDE SEQUENCE [LARGE SCALE GENOMIC DNA]</scope>
    <source>
        <strain>Philadelphia 1 / ATCC 33152 / DSM 7513</strain>
    </source>
</reference>
<reference key="2">
    <citation type="journal article" date="2022" name="Mol. Microbiol.">
        <title>Proteins DotY and DotZ modulate the dynamics and localization of the type IVB coupling complex of Legionella pneumophila.</title>
        <authorList>
            <person name="Mace K."/>
            <person name="Meir A."/>
            <person name="Lukoyanova N."/>
            <person name="Liu L."/>
            <person name="Chetrit D."/>
            <person name="Hospenthal M.K."/>
            <person name="Roy C.R."/>
            <person name="Waksman G."/>
        </authorList>
    </citation>
    <scope>FUNCTION</scope>
    <scope>SUBUNIT</scope>
    <scope>SUBCELLULAR LOCATION</scope>
    <scope>DISRUPTION PHENOTYPE</scope>
    <source>
        <strain>Philadelphia 1 / Lp01</strain>
    </source>
</reference>
<reference evidence="8" key="3">
    <citation type="journal article" date="2020" name="Nat. Commun.">
        <title>Mechanism of effector capture and delivery by the type IV secretion system from Legionella pneumophila.</title>
        <authorList>
            <person name="Meir A."/>
            <person name="Mace K."/>
            <person name="Lukoyanova N."/>
            <person name="Chetrit D."/>
            <person name="Hospenthal M.K."/>
            <person name="Redzej A."/>
            <person name="Roy C."/>
            <person name="Waksman G."/>
        </authorList>
    </citation>
    <scope>STRUCTURE BY ELECTRON MICROSCOPY (3.70 ANGSTROMS)</scope>
    <scope>FUNCTION</scope>
    <scope>SUBUNIT</scope>
    <scope>DISRUPTION PHENOTYPE</scope>
    <source>
        <strain>Philadelphia 1 / Lp01</strain>
    </source>
</reference>
<sequence length="230" mass="25520">MPKYTLPTRDALLKAMQVGETSIEAAEYMATRFEQILTKAKLLPECNDMLEKIKEYAQFVKFKLLSSAQVWSGQERPTSDYQNTQENKAEFLASHLEGLPSGLKLEVAIGDDAKILRGFSSNGKMVEGDQLKTMDGLLEGWLAKNSLAISGGAVVKIDNTGNQTKVDPQEIRQLINDSEKGVAKYFADKGVGMEVAQRTYQEPKALETKREEIRQEIESGAEAPTTQSIR</sequence>
<gene>
    <name evidence="4" type="primary">dotY</name>
    <name evidence="7" type="ordered locus">lpg0294</name>
</gene>
<proteinExistence type="evidence at protein level"/>